<comment type="function">
    <text evidence="1">One of the primary rRNA binding proteins, it binds directly near the 3'-end of the 23S rRNA, where it nucleates assembly of the 50S subunit.</text>
</comment>
<comment type="subunit">
    <text evidence="1">Part of the 50S ribosomal subunit. Forms a cluster with proteins L14 and L19.</text>
</comment>
<comment type="PTM">
    <text evidence="1">Methylated by PrmB.</text>
</comment>
<comment type="similarity">
    <text evidence="1">Belongs to the universal ribosomal protein uL3 family.</text>
</comment>
<reference key="1">
    <citation type="submission" date="2006-05" db="EMBL/GenBank/DDBJ databases">
        <title>Complete sequence of chromosome of Silicibacter sp. TM1040.</title>
        <authorList>
            <consortium name="US DOE Joint Genome Institute"/>
            <person name="Copeland A."/>
            <person name="Lucas S."/>
            <person name="Lapidus A."/>
            <person name="Barry K."/>
            <person name="Detter J.C."/>
            <person name="Glavina del Rio T."/>
            <person name="Hammon N."/>
            <person name="Israni S."/>
            <person name="Dalin E."/>
            <person name="Tice H."/>
            <person name="Pitluck S."/>
            <person name="Brettin T."/>
            <person name="Bruce D."/>
            <person name="Han C."/>
            <person name="Tapia R."/>
            <person name="Goodwin L."/>
            <person name="Thompson L.S."/>
            <person name="Gilna P."/>
            <person name="Schmutz J."/>
            <person name="Larimer F."/>
            <person name="Land M."/>
            <person name="Hauser L."/>
            <person name="Kyrpides N."/>
            <person name="Kim E."/>
            <person name="Belas R."/>
            <person name="Moran M.A."/>
            <person name="Buchan A."/>
            <person name="Gonzalez J.M."/>
            <person name="Schell M.A."/>
            <person name="Sun F."/>
            <person name="Richardson P."/>
        </authorList>
    </citation>
    <scope>NUCLEOTIDE SEQUENCE [LARGE SCALE GENOMIC DNA]</scope>
    <source>
        <strain>TM1040</strain>
    </source>
</reference>
<accession>Q1GK37</accession>
<protein>
    <recommendedName>
        <fullName evidence="1">Large ribosomal subunit protein uL3</fullName>
    </recommendedName>
    <alternativeName>
        <fullName evidence="2">50S ribosomal protein L3</fullName>
    </alternativeName>
</protein>
<keyword id="KW-0488">Methylation</keyword>
<keyword id="KW-1185">Reference proteome</keyword>
<keyword id="KW-0687">Ribonucleoprotein</keyword>
<keyword id="KW-0689">Ribosomal protein</keyword>
<keyword id="KW-0694">RNA-binding</keyword>
<keyword id="KW-0699">rRNA-binding</keyword>
<sequence length="239" mass="25057">MRSGIIAKKVGMTRLFMEDGKQIPVTVLSLDGLQVVAQRTEDKDGYTAVQLGAGSAKVKRVSKAMRGHFAASKVEPKRKLVEFRVPADGLIEVGAEISAEHFLEGQKVDVTGTSIGKGFAGAMKRWNFGGLRASHGVSISHRSHGSTGQCQDPGKVFKGKKMAGHMGAARVTTQNLEVVKTDADRGLVFIKGAVPGPKSGWVTVKDAVKKKAPEGLPFPAALKTAAEAAAEAPAEGGEA</sequence>
<dbReference type="EMBL" id="CP000377">
    <property type="protein sequence ID" value="ABF62979.1"/>
    <property type="molecule type" value="Genomic_DNA"/>
</dbReference>
<dbReference type="RefSeq" id="WP_005621928.1">
    <property type="nucleotide sequence ID" value="NC_008044.1"/>
</dbReference>
<dbReference type="SMR" id="Q1GK37"/>
<dbReference type="STRING" id="292414.TM1040_0246"/>
<dbReference type="GeneID" id="28248357"/>
<dbReference type="KEGG" id="sit:TM1040_0246"/>
<dbReference type="eggNOG" id="COG0087">
    <property type="taxonomic scope" value="Bacteria"/>
</dbReference>
<dbReference type="HOGENOM" id="CLU_044142_2_0_5"/>
<dbReference type="OrthoDB" id="9806135at2"/>
<dbReference type="Proteomes" id="UP000000636">
    <property type="component" value="Chromosome"/>
</dbReference>
<dbReference type="GO" id="GO:0022625">
    <property type="term" value="C:cytosolic large ribosomal subunit"/>
    <property type="evidence" value="ECO:0007669"/>
    <property type="project" value="TreeGrafter"/>
</dbReference>
<dbReference type="GO" id="GO:0019843">
    <property type="term" value="F:rRNA binding"/>
    <property type="evidence" value="ECO:0007669"/>
    <property type="project" value="UniProtKB-UniRule"/>
</dbReference>
<dbReference type="GO" id="GO:0003735">
    <property type="term" value="F:structural constituent of ribosome"/>
    <property type="evidence" value="ECO:0007669"/>
    <property type="project" value="InterPro"/>
</dbReference>
<dbReference type="GO" id="GO:0006412">
    <property type="term" value="P:translation"/>
    <property type="evidence" value="ECO:0007669"/>
    <property type="project" value="UniProtKB-UniRule"/>
</dbReference>
<dbReference type="FunFam" id="2.40.30.10:FF:000004">
    <property type="entry name" value="50S ribosomal protein L3"/>
    <property type="match status" value="1"/>
</dbReference>
<dbReference type="FunFam" id="3.30.160.810:FF:000001">
    <property type="entry name" value="50S ribosomal protein L3"/>
    <property type="match status" value="1"/>
</dbReference>
<dbReference type="Gene3D" id="3.30.160.810">
    <property type="match status" value="1"/>
</dbReference>
<dbReference type="Gene3D" id="2.40.30.10">
    <property type="entry name" value="Translation factors"/>
    <property type="match status" value="1"/>
</dbReference>
<dbReference type="HAMAP" id="MF_01325_B">
    <property type="entry name" value="Ribosomal_uL3_B"/>
    <property type="match status" value="1"/>
</dbReference>
<dbReference type="InterPro" id="IPR000597">
    <property type="entry name" value="Ribosomal_uL3"/>
</dbReference>
<dbReference type="InterPro" id="IPR019927">
    <property type="entry name" value="Ribosomal_uL3_bac/org-type"/>
</dbReference>
<dbReference type="InterPro" id="IPR019926">
    <property type="entry name" value="Ribosomal_uL3_CS"/>
</dbReference>
<dbReference type="InterPro" id="IPR009000">
    <property type="entry name" value="Transl_B-barrel_sf"/>
</dbReference>
<dbReference type="NCBIfam" id="TIGR03625">
    <property type="entry name" value="L3_bact"/>
    <property type="match status" value="1"/>
</dbReference>
<dbReference type="PANTHER" id="PTHR11229">
    <property type="entry name" value="50S RIBOSOMAL PROTEIN L3"/>
    <property type="match status" value="1"/>
</dbReference>
<dbReference type="PANTHER" id="PTHR11229:SF16">
    <property type="entry name" value="LARGE RIBOSOMAL SUBUNIT PROTEIN UL3C"/>
    <property type="match status" value="1"/>
</dbReference>
<dbReference type="Pfam" id="PF00297">
    <property type="entry name" value="Ribosomal_L3"/>
    <property type="match status" value="1"/>
</dbReference>
<dbReference type="SUPFAM" id="SSF50447">
    <property type="entry name" value="Translation proteins"/>
    <property type="match status" value="1"/>
</dbReference>
<dbReference type="PROSITE" id="PS00474">
    <property type="entry name" value="RIBOSOMAL_L3"/>
    <property type="match status" value="1"/>
</dbReference>
<name>RL3_RUEST</name>
<feature type="chain" id="PRO_1000052144" description="Large ribosomal subunit protein uL3">
    <location>
        <begin position="1"/>
        <end position="239"/>
    </location>
</feature>
<feature type="modified residue" description="N5-methylglutamine" evidence="1">
    <location>
        <position position="151"/>
    </location>
</feature>
<proteinExistence type="inferred from homology"/>
<evidence type="ECO:0000255" key="1">
    <source>
        <dbReference type="HAMAP-Rule" id="MF_01325"/>
    </source>
</evidence>
<evidence type="ECO:0000305" key="2"/>
<gene>
    <name evidence="1" type="primary">rplC</name>
    <name type="ordered locus">TM1040_0246</name>
</gene>
<organism>
    <name type="scientific">Ruegeria sp. (strain TM1040)</name>
    <name type="common">Silicibacter sp.</name>
    <dbReference type="NCBI Taxonomy" id="292414"/>
    <lineage>
        <taxon>Bacteria</taxon>
        <taxon>Pseudomonadati</taxon>
        <taxon>Pseudomonadota</taxon>
        <taxon>Alphaproteobacteria</taxon>
        <taxon>Rhodobacterales</taxon>
        <taxon>Roseobacteraceae</taxon>
        <taxon>Ruegeria</taxon>
    </lineage>
</organism>